<dbReference type="EMBL" id="KY764291">
    <property type="protein sequence ID" value="ARF05976.1"/>
    <property type="molecule type" value="Genomic_DNA"/>
</dbReference>
<dbReference type="SMR" id="A0A1W5T1T3"/>
<dbReference type="GO" id="GO:0005634">
    <property type="term" value="C:nucleus"/>
    <property type="evidence" value="ECO:0007669"/>
    <property type="project" value="UniProtKB-SubCell"/>
</dbReference>
<dbReference type="GO" id="GO:0003677">
    <property type="term" value="F:DNA binding"/>
    <property type="evidence" value="ECO:0007669"/>
    <property type="project" value="UniProtKB-KW"/>
</dbReference>
<dbReference type="GO" id="GO:0000981">
    <property type="term" value="F:DNA-binding transcription factor activity, RNA polymerase II-specific"/>
    <property type="evidence" value="ECO:0007669"/>
    <property type="project" value="InterPro"/>
</dbReference>
<dbReference type="GO" id="GO:0008270">
    <property type="term" value="F:zinc ion binding"/>
    <property type="evidence" value="ECO:0007669"/>
    <property type="project" value="InterPro"/>
</dbReference>
<dbReference type="CDD" id="cd00067">
    <property type="entry name" value="GAL4"/>
    <property type="match status" value="1"/>
</dbReference>
<dbReference type="Gene3D" id="4.10.240.10">
    <property type="entry name" value="Zn(2)-C6 fungal-type DNA-binding domain"/>
    <property type="match status" value="1"/>
</dbReference>
<dbReference type="InterPro" id="IPR036864">
    <property type="entry name" value="Zn2-C6_fun-type_DNA-bd_sf"/>
</dbReference>
<dbReference type="InterPro" id="IPR001138">
    <property type="entry name" value="Zn2Cys6_DnaBD"/>
</dbReference>
<dbReference type="Pfam" id="PF00172">
    <property type="entry name" value="Zn_clus"/>
    <property type="match status" value="1"/>
</dbReference>
<dbReference type="SUPFAM" id="SSF57701">
    <property type="entry name" value="Zn2/Cys6 DNA-binding domain"/>
    <property type="match status" value="1"/>
</dbReference>
<dbReference type="PROSITE" id="PS00463">
    <property type="entry name" value="ZN2_CY6_FUNGAL_1"/>
    <property type="match status" value="1"/>
</dbReference>
<dbReference type="PROSITE" id="PS50048">
    <property type="entry name" value="ZN2_CY6_FUNGAL_2"/>
    <property type="match status" value="1"/>
</dbReference>
<organism>
    <name type="scientific">Penicillium oxalicum</name>
    <dbReference type="NCBI Taxonomy" id="69781"/>
    <lineage>
        <taxon>Eukaryota</taxon>
        <taxon>Fungi</taxon>
        <taxon>Dikarya</taxon>
        <taxon>Ascomycota</taxon>
        <taxon>Pezizomycotina</taxon>
        <taxon>Eurotiomycetes</taxon>
        <taxon>Eurotiomycetidae</taxon>
        <taxon>Eurotiales</taxon>
        <taxon>Aspergillaceae</taxon>
        <taxon>Penicillium</taxon>
    </lineage>
</organism>
<proteinExistence type="inferred from homology"/>
<sequence length="574" mass="62081">MSEAEPSVVVAEQCRRSACDRCRGQKLRCERPVSNSSTTPCRRCLKAHVRCVTTAQPHRTKPLSSLQYLHHTESNYDPHSATVAGQLPVAAVAGLGDLDPSLLHMTGVQNPRRLSHSSSMANPVDSRPPGRTRRLSNPDHFLPHPPLHPNGVLDTDGTPLLDSIDHLPDMTASRGFGFSAALTPHSPSGSSDFFDYFRPMAEDNNRSPWMDAFTNLPPDHREGTPAGSNYRGSLTGENQFRSSLQSSRGLNGFETPQRESRHREMDIVSIKNECIARMGKLNRGLLQDVGLVNSGKVAGTLLFSQASRSTYLEVEKGRKGGQNYVIGKMLHSSKELLDILKQLERCKSTLFPPGHTERTTSTADEVTTAMTETTTLNQTGSHAPSSPLGGNPLPPLSGPLSASASHSSSCASSSSASASTSGASLLSSSTSAPSTSPAISLQLDTTLTLLFLTGYTSVIQLYEGVFSFIRDSVAANPSGSNFLPTLPKLQVDGFEVGSSTRDLQICILLQVSTHILNQIEERLHAIRDRAEGHVPAALLDTILDRSDPSQRGAKGRELCRIVRDIKEHLKHYAE</sequence>
<protein>
    <recommendedName>
        <fullName evidence="4">C6 finger transcription factor poxB</fullName>
    </recommendedName>
    <alternativeName>
        <fullName evidence="4">Oxaleimides biosynthesis cluster protein B</fullName>
    </alternativeName>
</protein>
<comment type="function">
    <text evidence="3">Transcription factor that positively regulates the expression of the gene cluster that mediates the biosynthesis of oxaleimides, cytotoxic compounds containing an unusual disubstituted succinimide moiety.</text>
</comment>
<comment type="subcellular location">
    <subcellularLocation>
        <location evidence="1">Nucleus</location>
    </subcellularLocation>
</comment>
<reference key="1">
    <citation type="journal article" date="2017" name="J. Am. Chem. Soc.">
        <title>Collaborative Biosynthesis of Maleimide- and Succinimide-Containing Natural Products by Fungal Polyketide Megasynthases.</title>
        <authorList>
            <person name="Sato M."/>
            <person name="Dander J.E."/>
            <person name="Sato C."/>
            <person name="Hung Y.S."/>
            <person name="Gao S.S."/>
            <person name="Tang M.C."/>
            <person name="Hang L."/>
            <person name="Winter J.M."/>
            <person name="Garg N.K."/>
            <person name="Watanabe K."/>
            <person name="Tang Y."/>
        </authorList>
    </citation>
    <scope>NUCLEOTIDE SEQUENCE [GENOMIC DNA]</scope>
    <scope>FUNCTION</scope>
    <source>
        <strain>K85</strain>
    </source>
</reference>
<reference key="2">
    <citation type="journal article" date="2020" name="Chem. Commun. (Camb.)">
        <title>Evidence for enzyme catalysed intramolecular [4+2] Diels-Alder cyclization during the biosynthesis of pyrichalasin H.</title>
        <authorList>
            <person name="Hantke V."/>
            <person name="Skellam E.J."/>
            <person name="Cox R.J."/>
        </authorList>
    </citation>
    <scope>FUNCTION</scope>
</reference>
<gene>
    <name evidence="4" type="primary">poxB</name>
</gene>
<name>POXB_PENOX</name>
<keyword id="KW-0238">DNA-binding</keyword>
<keyword id="KW-0479">Metal-binding</keyword>
<keyword id="KW-0539">Nucleus</keyword>
<keyword id="KW-0804">Transcription</keyword>
<keyword id="KW-0805">Transcription regulation</keyword>
<keyword id="KW-0862">Zinc</keyword>
<feature type="chain" id="PRO_0000453769" description="C6 finger transcription factor poxB">
    <location>
        <begin position="1"/>
        <end position="574"/>
    </location>
</feature>
<feature type="DNA-binding region" description="Zn(2)-C6 fungal-type" evidence="1">
    <location>
        <begin position="19"/>
        <end position="51"/>
    </location>
</feature>
<feature type="region of interest" description="Disordered" evidence="2">
    <location>
        <begin position="111"/>
        <end position="133"/>
    </location>
</feature>
<feature type="region of interest" description="Disordered" evidence="2">
    <location>
        <begin position="242"/>
        <end position="262"/>
    </location>
</feature>
<feature type="region of interest" description="Disordered" evidence="2">
    <location>
        <begin position="376"/>
        <end position="404"/>
    </location>
</feature>
<accession>A0A1W5T1T3</accession>
<evidence type="ECO:0000255" key="1">
    <source>
        <dbReference type="PROSITE-ProRule" id="PRU00227"/>
    </source>
</evidence>
<evidence type="ECO:0000256" key="2">
    <source>
        <dbReference type="SAM" id="MobiDB-lite"/>
    </source>
</evidence>
<evidence type="ECO:0000269" key="3">
    <source>
    </source>
</evidence>
<evidence type="ECO:0000303" key="4">
    <source>
    </source>
</evidence>